<dbReference type="EC" id="1.3.1.54"/>
<dbReference type="EMBL" id="AF010496">
    <property type="protein sequence ID" value="AAC16188.1"/>
    <property type="molecule type" value="Genomic_DNA"/>
</dbReference>
<dbReference type="EMBL" id="CP001312">
    <property type="protein sequence ID" value="ADE85787.1"/>
    <property type="molecule type" value="Genomic_DNA"/>
</dbReference>
<dbReference type="PIR" id="T03535">
    <property type="entry name" value="T03535"/>
</dbReference>
<dbReference type="RefSeq" id="WP_013067766.1">
    <property type="nucleotide sequence ID" value="NC_014034.1"/>
</dbReference>
<dbReference type="PDB" id="4X7G">
    <property type="method" value="X-ray"/>
    <property type="resolution" value="1.22 A"/>
    <property type="chains" value="A=1-251"/>
</dbReference>
<dbReference type="PDB" id="5C4N">
    <property type="method" value="X-ray"/>
    <property type="resolution" value="1.63 A"/>
    <property type="chains" value="D=1-251"/>
</dbReference>
<dbReference type="PDB" id="5C4R">
    <property type="method" value="X-ray"/>
    <property type="resolution" value="3.17 A"/>
    <property type="chains" value="A=1-251"/>
</dbReference>
<dbReference type="PDBsum" id="4X7G"/>
<dbReference type="PDBsum" id="5C4N"/>
<dbReference type="PDBsum" id="5C4R"/>
<dbReference type="SMR" id="O68098"/>
<dbReference type="STRING" id="272942.RCAP_rcc02043"/>
<dbReference type="GeneID" id="31490905"/>
<dbReference type="KEGG" id="rcp:RCAP_rcc02043"/>
<dbReference type="eggNOG" id="COG2099">
    <property type="taxonomic scope" value="Bacteria"/>
</dbReference>
<dbReference type="HOGENOM" id="CLU_068627_1_0_5"/>
<dbReference type="OrthoDB" id="5183775at2"/>
<dbReference type="UniPathway" id="UPA00148">
    <property type="reaction ID" value="UER00217"/>
</dbReference>
<dbReference type="EvolutionaryTrace" id="O68098"/>
<dbReference type="Proteomes" id="UP000002361">
    <property type="component" value="Chromosome"/>
</dbReference>
<dbReference type="GO" id="GO:0016994">
    <property type="term" value="F:precorrin-6A reductase activity"/>
    <property type="evidence" value="ECO:0007669"/>
    <property type="project" value="UniProtKB-EC"/>
</dbReference>
<dbReference type="GO" id="GO:0009236">
    <property type="term" value="P:cobalamin biosynthetic process"/>
    <property type="evidence" value="ECO:0007669"/>
    <property type="project" value="UniProtKB-UniPathway"/>
</dbReference>
<dbReference type="InterPro" id="IPR003723">
    <property type="entry name" value="Precorrin-6x_reduct"/>
</dbReference>
<dbReference type="NCBIfam" id="TIGR00715">
    <property type="entry name" value="precor6x_red"/>
    <property type="match status" value="1"/>
</dbReference>
<dbReference type="NCBIfam" id="NF005968">
    <property type="entry name" value="PRK08057.1-2"/>
    <property type="match status" value="1"/>
</dbReference>
<dbReference type="PANTHER" id="PTHR36925">
    <property type="entry name" value="COBALT-PRECORRIN-6A REDUCTASE"/>
    <property type="match status" value="1"/>
</dbReference>
<dbReference type="PANTHER" id="PTHR36925:SF1">
    <property type="entry name" value="COBALT-PRECORRIN-6A REDUCTASE"/>
    <property type="match status" value="1"/>
</dbReference>
<dbReference type="Pfam" id="PF02571">
    <property type="entry name" value="CbiJ"/>
    <property type="match status" value="1"/>
</dbReference>
<dbReference type="PROSITE" id="PS51014">
    <property type="entry name" value="COBK_CBIJ"/>
    <property type="match status" value="1"/>
</dbReference>
<keyword id="KW-0002">3D-structure</keyword>
<keyword id="KW-0169">Cobalamin biosynthesis</keyword>
<keyword id="KW-0521">NADP</keyword>
<keyword id="KW-0560">Oxidoreductase</keyword>
<keyword id="KW-1185">Reference proteome</keyword>
<gene>
    <name type="primary">cobK</name>
    <name type="ordered locus">RCAP_rcc02043</name>
</gene>
<comment type="function">
    <text>Catalyzes the reduction of the macrocycle of precorrin-6X into precorrin-6Y.</text>
</comment>
<comment type="catalytic activity">
    <reaction>
        <text>precorrin-6B + NADP(+) = precorrin-6A + NADPH + 2 H(+)</text>
        <dbReference type="Rhea" id="RHEA:23408"/>
        <dbReference type="ChEBI" id="CHEBI:15378"/>
        <dbReference type="ChEBI" id="CHEBI:57783"/>
        <dbReference type="ChEBI" id="CHEBI:58349"/>
        <dbReference type="ChEBI" id="CHEBI:58532"/>
        <dbReference type="ChEBI" id="CHEBI:77872"/>
        <dbReference type="EC" id="1.3.1.54"/>
    </reaction>
</comment>
<comment type="pathway">
    <text>Cofactor biosynthesis; adenosylcobalamin biosynthesis; cob(II)yrinate a,c-diamide from precorrin-2 (aerobic route): step 6/10.</text>
</comment>
<comment type="similarity">
    <text evidence="1">Belongs to the precorrin-6x reductase family.</text>
</comment>
<sequence length="251" mass="26048">MTRLLVLGGTTEASRLAKTLADQGFEAVFSYAGRTGAPVAQPLPTRIGGFGGVAGLVDYLTREGVSHVIDATHPFAAQMSANAVAACAQTGVALCAFERAPWTAQAGDRWTHVPDLAAAVAALPQAPARVFLAIGKQHLRDFSAAPQHHYLLRLVDPPEGPLPLPDARAVIARGPFTVQGDTELLRSETITHVVAKNAGGAGAEAKLIAARSLGLPVILIDRPAVPARDICATLEGVMGWLADHGATPRGV</sequence>
<name>COBK_RHOCB</name>
<proteinExistence type="evidence at protein level"/>
<organism>
    <name type="scientific">Rhodobacter capsulatus (strain ATCC BAA-309 / NBRC 16581 / SB1003)</name>
    <dbReference type="NCBI Taxonomy" id="272942"/>
    <lineage>
        <taxon>Bacteria</taxon>
        <taxon>Pseudomonadati</taxon>
        <taxon>Pseudomonadota</taxon>
        <taxon>Alphaproteobacteria</taxon>
        <taxon>Rhodobacterales</taxon>
        <taxon>Rhodobacter group</taxon>
        <taxon>Rhodobacter</taxon>
    </lineage>
</organism>
<evidence type="ECO:0000255" key="1">
    <source>
        <dbReference type="PROSITE-ProRule" id="PRU00356"/>
    </source>
</evidence>
<evidence type="ECO:0007829" key="2">
    <source>
        <dbReference type="PDB" id="4X7G"/>
    </source>
</evidence>
<protein>
    <recommendedName>
        <fullName>Precorrin-6A reductase</fullName>
        <ecNumber>1.3.1.54</ecNumber>
    </recommendedName>
    <alternativeName>
        <fullName>Precorrin-6X reductase</fullName>
    </alternativeName>
</protein>
<feature type="chain" id="PRO_0000135921" description="Precorrin-6A reductase">
    <location>
        <begin position="1"/>
        <end position="251"/>
    </location>
</feature>
<feature type="strand" evidence="2">
    <location>
        <begin position="4"/>
        <end position="7"/>
    </location>
</feature>
<feature type="helix" evidence="2">
    <location>
        <begin position="11"/>
        <end position="22"/>
    </location>
</feature>
<feature type="strand" evidence="2">
    <location>
        <begin position="27"/>
        <end position="31"/>
    </location>
</feature>
<feature type="strand" evidence="2">
    <location>
        <begin position="35"/>
        <end position="37"/>
    </location>
</feature>
<feature type="strand" evidence="2">
    <location>
        <begin position="45"/>
        <end position="48"/>
    </location>
</feature>
<feature type="helix" evidence="2">
    <location>
        <begin position="52"/>
        <end position="63"/>
    </location>
</feature>
<feature type="strand" evidence="2">
    <location>
        <begin position="67"/>
        <end position="70"/>
    </location>
</feature>
<feature type="helix" evidence="2">
    <location>
        <begin position="77"/>
        <end position="90"/>
    </location>
</feature>
<feature type="strand" evidence="2">
    <location>
        <begin position="93"/>
        <end position="97"/>
    </location>
</feature>
<feature type="strand" evidence="2">
    <location>
        <begin position="109"/>
        <end position="115"/>
    </location>
</feature>
<feature type="helix" evidence="2">
    <location>
        <begin position="116"/>
        <end position="122"/>
    </location>
</feature>
<feature type="strand" evidence="2">
    <location>
        <begin position="129"/>
        <end position="132"/>
    </location>
</feature>
<feature type="helix" evidence="2">
    <location>
        <begin position="139"/>
        <end position="144"/>
    </location>
</feature>
<feature type="strand" evidence="2">
    <location>
        <begin position="148"/>
        <end position="156"/>
    </location>
</feature>
<feature type="strand" evidence="2">
    <location>
        <begin position="165"/>
        <end position="171"/>
    </location>
</feature>
<feature type="helix" evidence="2">
    <location>
        <begin position="178"/>
        <end position="187"/>
    </location>
</feature>
<feature type="strand" evidence="2">
    <location>
        <begin position="192"/>
        <end position="196"/>
    </location>
</feature>
<feature type="turn" evidence="2">
    <location>
        <begin position="202"/>
        <end position="204"/>
    </location>
</feature>
<feature type="helix" evidence="2">
    <location>
        <begin position="205"/>
        <end position="212"/>
    </location>
</feature>
<feature type="strand" evidence="2">
    <location>
        <begin position="216"/>
        <end position="220"/>
    </location>
</feature>
<feature type="strand" evidence="2">
    <location>
        <begin position="229"/>
        <end position="231"/>
    </location>
</feature>
<feature type="helix" evidence="2">
    <location>
        <begin position="234"/>
        <end position="243"/>
    </location>
</feature>
<reference key="1">
    <citation type="journal article" date="1997" name="Proc. Natl. Acad. Sci. U.S.A.">
        <title>Sequence of a 189-kb segment of the chromosome of Rhodobacter capsulatus SB1003.</title>
        <authorList>
            <person name="Vlcek C."/>
            <person name="Paces V."/>
            <person name="Maltsev N."/>
            <person name="Paces J."/>
            <person name="Haselkorn R."/>
            <person name="Fonstein M."/>
        </authorList>
    </citation>
    <scope>NUCLEOTIDE SEQUENCE [GENOMIC DNA]</scope>
    <source>
        <strain>ATCC BAA-309 / NBRC 16581 / SB1003</strain>
    </source>
</reference>
<reference key="2">
    <citation type="journal article" date="2010" name="J. Bacteriol.">
        <title>Complete genome sequence of the photosynthetic purple nonsulfur bacterium Rhodobacter capsulatus SB 1003.</title>
        <authorList>
            <person name="Strnad H."/>
            <person name="Lapidus A."/>
            <person name="Paces J."/>
            <person name="Ulbrich P."/>
            <person name="Vlcek C."/>
            <person name="Paces V."/>
            <person name="Haselkorn R."/>
        </authorList>
    </citation>
    <scope>NUCLEOTIDE SEQUENCE [LARGE SCALE GENOMIC DNA]</scope>
    <source>
        <strain>ATCC BAA-309 / NBRC 16581 / SB1003</strain>
    </source>
</reference>
<accession>O68098</accession>
<accession>D5AV05</accession>